<keyword id="KW-0449">Lipoprotein</keyword>
<keyword id="KW-0488">Methylation</keyword>
<keyword id="KW-0636">Prenylation</keyword>
<keyword id="KW-1185">Reference proteome</keyword>
<keyword id="KW-0807">Transducer</keyword>
<comment type="function">
    <text evidence="3">Guanine nucleotide-binding proteins (G proteins) are involved as a modulator or transducer in various transmembrane signaling systems. The beta and gamma chains are required for the GTPase activity, for replacement of GDP by GTP, and for G protein-effector interaction.</text>
</comment>
<comment type="subunit">
    <text evidence="1">G proteins are composed of 3 units, alpha, beta and gamma.</text>
</comment>
<comment type="tissue specificity">
    <text evidence="3">Expressed in flowers and siliques.</text>
</comment>
<comment type="disruption phenotype">
    <text evidence="3">Leaves with a roundish shape as well as rounder and smaller flowers.</text>
</comment>
<sequence length="251" mass="27157">MSAPSGGGEGGGKESAAGGVSSSSLAPSSLPPPRPKSPPEYPDLYGKRREAARVQMLEREIGFLEGEIKFIEGVQPASRCIKEVSDFVVANSDPLIPAQRKSRRSFRFWKWLCGPCLSLVSFCCCCQSKCSCHLRKPKCCNCTSCSCIGSKCCDGSCCSNICCCPRLSCPSCSCFRGCWCSCPDMSCCIPSCFRSCSCTRPSCLNKKKSSCCSCNCKIRWSSCFSCPKVRLCSCCFCNCKNLCSNPCCLAF</sequence>
<proteinExistence type="evidence at transcript level"/>
<dbReference type="EMBL" id="AF296832">
    <property type="status" value="NOT_ANNOTATED_CDS"/>
    <property type="molecule type" value="Genomic_DNA"/>
</dbReference>
<dbReference type="EMBL" id="CP002688">
    <property type="protein sequence ID" value="AED92869.1"/>
    <property type="molecule type" value="Genomic_DNA"/>
</dbReference>
<dbReference type="EMBL" id="BT015160">
    <property type="protein sequence ID" value="AAT85756.1"/>
    <property type="molecule type" value="mRNA"/>
</dbReference>
<dbReference type="EMBL" id="AK221695">
    <property type="protein sequence ID" value="BAD95404.1"/>
    <property type="molecule type" value="mRNA"/>
</dbReference>
<dbReference type="RefSeq" id="NP_680175.2">
    <property type="nucleotide sequence ID" value="NM_147870.4"/>
</dbReference>
<dbReference type="BioGRID" id="17461">
    <property type="interactions" value="1"/>
</dbReference>
<dbReference type="FunCoup" id="Q6AWT8">
    <property type="interactions" value="2"/>
</dbReference>
<dbReference type="STRING" id="3702.Q6AWT8"/>
<dbReference type="iPTMnet" id="Q6AWT8"/>
<dbReference type="PaxDb" id="3702-AT5G20635.1"/>
<dbReference type="ProteomicsDB" id="224778"/>
<dbReference type="EnsemblPlants" id="AT5G20635.1">
    <property type="protein sequence ID" value="AT5G20635.1"/>
    <property type="gene ID" value="AT5G20635"/>
</dbReference>
<dbReference type="GeneID" id="832186"/>
<dbReference type="Gramene" id="AT5G20635.1">
    <property type="protein sequence ID" value="AT5G20635.1"/>
    <property type="gene ID" value="AT5G20635"/>
</dbReference>
<dbReference type="KEGG" id="ath:AT5G20635"/>
<dbReference type="Araport" id="AT5G20635"/>
<dbReference type="TAIR" id="AT5G20635">
    <property type="gene designation" value="AGG3"/>
</dbReference>
<dbReference type="eggNOG" id="ENOG502RZC5">
    <property type="taxonomic scope" value="Eukaryota"/>
</dbReference>
<dbReference type="HOGENOM" id="CLU_1117029_0_0_1"/>
<dbReference type="InParanoid" id="Q6AWT8"/>
<dbReference type="PRO" id="PR:Q6AWT8"/>
<dbReference type="Proteomes" id="UP000006548">
    <property type="component" value="Chromosome 5"/>
</dbReference>
<dbReference type="ExpressionAtlas" id="Q6AWT8">
    <property type="expression patterns" value="baseline and differential"/>
</dbReference>
<dbReference type="GO" id="GO:0005886">
    <property type="term" value="C:plasma membrane"/>
    <property type="evidence" value="ECO:0000314"/>
    <property type="project" value="TAIR"/>
</dbReference>
<dbReference type="GO" id="GO:0009737">
    <property type="term" value="P:response to abscisic acid"/>
    <property type="evidence" value="ECO:0000315"/>
    <property type="project" value="TAIR"/>
</dbReference>
<dbReference type="GO" id="GO:0007165">
    <property type="term" value="P:signal transduction"/>
    <property type="evidence" value="ECO:0007669"/>
    <property type="project" value="UniProtKB-KW"/>
</dbReference>
<dbReference type="InterPro" id="IPR055305">
    <property type="entry name" value="GG3-like"/>
</dbReference>
<dbReference type="PANTHER" id="PTHR32378">
    <property type="entry name" value="GUANINE NUCLEOTIDE-BINDING PROTEIN SUBUNIT GAMMA 3"/>
    <property type="match status" value="1"/>
</dbReference>
<dbReference type="PANTHER" id="PTHR32378:SF10">
    <property type="entry name" value="GUANINE NUCLEOTIDE-BINDING PROTEIN SUBUNIT GAMMA 3"/>
    <property type="match status" value="1"/>
</dbReference>
<dbReference type="SMART" id="SM01224">
    <property type="entry name" value="G_gamma"/>
    <property type="match status" value="1"/>
</dbReference>
<organism>
    <name type="scientific">Arabidopsis thaliana</name>
    <name type="common">Mouse-ear cress</name>
    <dbReference type="NCBI Taxonomy" id="3702"/>
    <lineage>
        <taxon>Eukaryota</taxon>
        <taxon>Viridiplantae</taxon>
        <taxon>Streptophyta</taxon>
        <taxon>Embryophyta</taxon>
        <taxon>Tracheophyta</taxon>
        <taxon>Spermatophyta</taxon>
        <taxon>Magnoliopsida</taxon>
        <taxon>eudicotyledons</taxon>
        <taxon>Gunneridae</taxon>
        <taxon>Pentapetalae</taxon>
        <taxon>rosids</taxon>
        <taxon>malvids</taxon>
        <taxon>Brassicales</taxon>
        <taxon>Brassicaceae</taxon>
        <taxon>Camelineae</taxon>
        <taxon>Arabidopsis</taxon>
    </lineage>
</organism>
<gene>
    <name type="primary">GG3</name>
    <name type="synonym">AGG3</name>
    <name type="ordered locus">At5g20635</name>
    <name type="ORF">T1M15</name>
</gene>
<reference key="1">
    <citation type="journal article" date="2000" name="Nature">
        <title>Sequence and analysis of chromosome 5 of the plant Arabidopsis thaliana.</title>
        <authorList>
            <person name="Tabata S."/>
            <person name="Kaneko T."/>
            <person name="Nakamura Y."/>
            <person name="Kotani H."/>
            <person name="Kato T."/>
            <person name="Asamizu E."/>
            <person name="Miyajima N."/>
            <person name="Sasamoto S."/>
            <person name="Kimura T."/>
            <person name="Hosouchi T."/>
            <person name="Kawashima K."/>
            <person name="Kohara M."/>
            <person name="Matsumoto M."/>
            <person name="Matsuno A."/>
            <person name="Muraki A."/>
            <person name="Nakayama S."/>
            <person name="Nakazaki N."/>
            <person name="Naruo K."/>
            <person name="Okumura S."/>
            <person name="Shinpo S."/>
            <person name="Takeuchi C."/>
            <person name="Wada T."/>
            <person name="Watanabe A."/>
            <person name="Yamada M."/>
            <person name="Yasuda M."/>
            <person name="Sato S."/>
            <person name="de la Bastide M."/>
            <person name="Huang E."/>
            <person name="Spiegel L."/>
            <person name="Gnoj L."/>
            <person name="O'Shaughnessy A."/>
            <person name="Preston R."/>
            <person name="Habermann K."/>
            <person name="Murray J."/>
            <person name="Johnson D."/>
            <person name="Rohlfing T."/>
            <person name="Nelson J."/>
            <person name="Stoneking T."/>
            <person name="Pepin K."/>
            <person name="Spieth J."/>
            <person name="Sekhon M."/>
            <person name="Armstrong J."/>
            <person name="Becker M."/>
            <person name="Belter E."/>
            <person name="Cordum H."/>
            <person name="Cordes M."/>
            <person name="Courtney L."/>
            <person name="Courtney W."/>
            <person name="Dante M."/>
            <person name="Du H."/>
            <person name="Edwards J."/>
            <person name="Fryman J."/>
            <person name="Haakensen B."/>
            <person name="Lamar E."/>
            <person name="Latreille P."/>
            <person name="Leonard S."/>
            <person name="Meyer R."/>
            <person name="Mulvaney E."/>
            <person name="Ozersky P."/>
            <person name="Riley A."/>
            <person name="Strowmatt C."/>
            <person name="Wagner-McPherson C."/>
            <person name="Wollam A."/>
            <person name="Yoakum M."/>
            <person name="Bell M."/>
            <person name="Dedhia N."/>
            <person name="Parnell L."/>
            <person name="Shah R."/>
            <person name="Rodriguez M."/>
            <person name="Hoon See L."/>
            <person name="Vil D."/>
            <person name="Baker J."/>
            <person name="Kirchoff K."/>
            <person name="Toth K."/>
            <person name="King L."/>
            <person name="Bahret A."/>
            <person name="Miller B."/>
            <person name="Marra M.A."/>
            <person name="Martienssen R."/>
            <person name="McCombie W.R."/>
            <person name="Wilson R.K."/>
            <person name="Murphy G."/>
            <person name="Bancroft I."/>
            <person name="Volckaert G."/>
            <person name="Wambutt R."/>
            <person name="Duesterhoeft A."/>
            <person name="Stiekema W."/>
            <person name="Pohl T."/>
            <person name="Entian K.-D."/>
            <person name="Terryn N."/>
            <person name="Hartley N."/>
            <person name="Bent E."/>
            <person name="Johnson S."/>
            <person name="Langham S.-A."/>
            <person name="McCullagh B."/>
            <person name="Robben J."/>
            <person name="Grymonprez B."/>
            <person name="Zimmermann W."/>
            <person name="Ramsperger U."/>
            <person name="Wedler H."/>
            <person name="Balke K."/>
            <person name="Wedler E."/>
            <person name="Peters S."/>
            <person name="van Staveren M."/>
            <person name="Dirkse W."/>
            <person name="Mooijman P."/>
            <person name="Klein Lankhorst R."/>
            <person name="Weitzenegger T."/>
            <person name="Bothe G."/>
            <person name="Rose M."/>
            <person name="Hauf J."/>
            <person name="Berneiser S."/>
            <person name="Hempel S."/>
            <person name="Feldpausch M."/>
            <person name="Lamberth S."/>
            <person name="Villarroel R."/>
            <person name="Gielen J."/>
            <person name="Ardiles W."/>
            <person name="Bents O."/>
            <person name="Lemcke K."/>
            <person name="Kolesov G."/>
            <person name="Mayer K.F.X."/>
            <person name="Rudd S."/>
            <person name="Schoof H."/>
            <person name="Schueller C."/>
            <person name="Zaccaria P."/>
            <person name="Mewes H.-W."/>
            <person name="Bevan M."/>
            <person name="Fransz P.F."/>
        </authorList>
    </citation>
    <scope>NUCLEOTIDE SEQUENCE [LARGE SCALE GENOMIC DNA]</scope>
    <source>
        <strain>cv. Columbia</strain>
    </source>
</reference>
<reference key="2">
    <citation type="journal article" date="2017" name="Plant J.">
        <title>Araport11: a complete reannotation of the Arabidopsis thaliana reference genome.</title>
        <authorList>
            <person name="Cheng C.Y."/>
            <person name="Krishnakumar V."/>
            <person name="Chan A.P."/>
            <person name="Thibaud-Nissen F."/>
            <person name="Schobel S."/>
            <person name="Town C.D."/>
        </authorList>
    </citation>
    <scope>GENOME REANNOTATION</scope>
    <source>
        <strain>cv. Columbia</strain>
    </source>
</reference>
<reference key="3">
    <citation type="submission" date="2004-08" db="EMBL/GenBank/DDBJ databases">
        <title>Arabidopsis ORF clones.</title>
        <authorList>
            <person name="Cheuk R."/>
            <person name="Chen H."/>
            <person name="Kim C.J."/>
            <person name="Shinn P."/>
            <person name="Ecker J.R."/>
        </authorList>
    </citation>
    <scope>NUCLEOTIDE SEQUENCE [LARGE SCALE MRNA]</scope>
    <source>
        <strain>cv. Columbia</strain>
    </source>
</reference>
<reference key="4">
    <citation type="submission" date="2005-03" db="EMBL/GenBank/DDBJ databases">
        <title>Large-scale analysis of RIKEN Arabidopsis full-length (RAFL) cDNAs.</title>
        <authorList>
            <person name="Totoki Y."/>
            <person name="Seki M."/>
            <person name="Ishida J."/>
            <person name="Nakajima M."/>
            <person name="Enju A."/>
            <person name="Kamiya A."/>
            <person name="Narusaka M."/>
            <person name="Shin-i T."/>
            <person name="Nakagawa M."/>
            <person name="Sakamoto N."/>
            <person name="Oishi K."/>
            <person name="Kohara Y."/>
            <person name="Kobayashi M."/>
            <person name="Toyoda A."/>
            <person name="Sakaki Y."/>
            <person name="Sakurai T."/>
            <person name="Iida K."/>
            <person name="Akiyama K."/>
            <person name="Satou M."/>
            <person name="Toyoda T."/>
            <person name="Konagaya A."/>
            <person name="Carninci P."/>
            <person name="Kawai J."/>
            <person name="Hayashizaki Y."/>
            <person name="Shinozaki K."/>
        </authorList>
    </citation>
    <scope>NUCLEOTIDE SEQUENCE [LARGE SCALE MRNA]</scope>
    <source>
        <strain>cv. Columbia</strain>
    </source>
</reference>
<reference key="5">
    <citation type="journal article" date="2012" name="J. Plant Physiol.">
        <title>Ggamma1+Ggamma2+Ggamma3=Gbeta: the search for heterotrimeric G-protein gamma subunits in Arabidopsis is over.</title>
        <authorList>
            <person name="Thung L."/>
            <person name="Trusov Y."/>
            <person name="Chakravorty D."/>
            <person name="Botella J.R."/>
        </authorList>
    </citation>
    <scope>FUNCTION</scope>
    <scope>DISRUPTION PHENOTYPE</scope>
    <scope>TISSUE SPECIFICITY</scope>
    <source>
        <strain>cv. Columbia</strain>
    </source>
</reference>
<accession>Q6AWT8</accession>
<evidence type="ECO:0000250" key="1"/>
<evidence type="ECO:0000256" key="2">
    <source>
        <dbReference type="SAM" id="MobiDB-lite"/>
    </source>
</evidence>
<evidence type="ECO:0000269" key="3">
    <source>
    </source>
</evidence>
<name>GG3_ARATH</name>
<protein>
    <recommendedName>
        <fullName>Guanine nucleotide-binding protein subunit gamma 3</fullName>
    </recommendedName>
    <alternativeName>
        <fullName>Ggamma-subunit 3</fullName>
    </alternativeName>
    <alternativeName>
        <fullName>Heterotrimeric G protein gamma-subunit 3</fullName>
        <shortName>AtAGG3</shortName>
    </alternativeName>
</protein>
<feature type="chain" id="PRO_0000419817" description="Guanine nucleotide-binding protein subunit gamma 3">
    <location>
        <begin position="1"/>
        <end position="248"/>
    </location>
</feature>
<feature type="propeptide" id="PRO_0000419818" description="Removed in mature form" evidence="1">
    <location>
        <begin position="249"/>
        <end position="251"/>
    </location>
</feature>
<feature type="domain" description="G protein gamma">
    <location>
        <begin position="46"/>
        <end position="126"/>
    </location>
</feature>
<feature type="region of interest" description="Disordered" evidence="2">
    <location>
        <begin position="1"/>
        <end position="44"/>
    </location>
</feature>
<feature type="compositionally biased region" description="Gly residues" evidence="2">
    <location>
        <begin position="1"/>
        <end position="10"/>
    </location>
</feature>
<feature type="compositionally biased region" description="Low complexity" evidence="2">
    <location>
        <begin position="14"/>
        <end position="28"/>
    </location>
</feature>
<feature type="compositionally biased region" description="Pro residues" evidence="2">
    <location>
        <begin position="29"/>
        <end position="41"/>
    </location>
</feature>
<feature type="modified residue" description="Cysteine methyl ester" evidence="1">
    <location>
        <position position="248"/>
    </location>
</feature>
<feature type="lipid moiety-binding region" description="S-farnesyl cysteine" evidence="1">
    <location>
        <position position="248"/>
    </location>
</feature>